<feature type="chain" id="PRO_0000195035" description="Nucleolar GTP-binding protein 1">
    <location>
        <begin position="1"/>
        <end position="647"/>
    </location>
</feature>
<feature type="domain" description="OBG-type G" evidence="1">
    <location>
        <begin position="168"/>
        <end position="340"/>
    </location>
</feature>
<feature type="region of interest" description="Disordered" evidence="2">
    <location>
        <begin position="594"/>
        <end position="647"/>
    </location>
</feature>
<feature type="compositionally biased region" description="Basic and acidic residues" evidence="2">
    <location>
        <begin position="598"/>
        <end position="626"/>
    </location>
</feature>
<feature type="binding site" evidence="1">
    <location>
        <begin position="174"/>
        <end position="181"/>
    </location>
    <ligand>
        <name>GTP</name>
        <dbReference type="ChEBI" id="CHEBI:37565"/>
    </ligand>
</feature>
<feature type="binding site" evidence="1">
    <location>
        <begin position="220"/>
        <end position="224"/>
    </location>
    <ligand>
        <name>GTP</name>
        <dbReference type="ChEBI" id="CHEBI:37565"/>
    </ligand>
</feature>
<feature type="binding site" evidence="1">
    <location>
        <begin position="288"/>
        <end position="291"/>
    </location>
    <ligand>
        <name>GTP</name>
        <dbReference type="ChEBI" id="CHEBI:37565"/>
    </ligand>
</feature>
<feature type="modified residue" description="Phosphoserine" evidence="6">
    <location>
        <position position="563"/>
    </location>
</feature>
<feature type="helix" evidence="8">
    <location>
        <begin position="21"/>
        <end position="27"/>
    </location>
</feature>
<feature type="helix" evidence="8">
    <location>
        <begin position="39"/>
        <end position="55"/>
    </location>
</feature>
<feature type="helix" evidence="7">
    <location>
        <begin position="490"/>
        <end position="510"/>
    </location>
</feature>
<feature type="turn" evidence="7">
    <location>
        <begin position="521"/>
        <end position="523"/>
    </location>
</feature>
<feature type="helix" evidence="7">
    <location>
        <begin position="528"/>
        <end position="538"/>
    </location>
</feature>
<organism>
    <name type="scientific">Saccharomyces cerevisiae (strain ATCC 204508 / S288c)</name>
    <name type="common">Baker's yeast</name>
    <dbReference type="NCBI Taxonomy" id="559292"/>
    <lineage>
        <taxon>Eukaryota</taxon>
        <taxon>Fungi</taxon>
        <taxon>Dikarya</taxon>
        <taxon>Ascomycota</taxon>
        <taxon>Saccharomycotina</taxon>
        <taxon>Saccharomycetes</taxon>
        <taxon>Saccharomycetales</taxon>
        <taxon>Saccharomycetaceae</taxon>
        <taxon>Saccharomyces</taxon>
    </lineage>
</organism>
<proteinExistence type="evidence at protein level"/>
<reference key="1">
    <citation type="journal article" date="1997" name="Nature">
        <title>The nucleotide sequence of Saccharomyces cerevisiae chromosome XVI.</title>
        <authorList>
            <person name="Bussey H."/>
            <person name="Storms R.K."/>
            <person name="Ahmed A."/>
            <person name="Albermann K."/>
            <person name="Allen E."/>
            <person name="Ansorge W."/>
            <person name="Araujo R."/>
            <person name="Aparicio A."/>
            <person name="Barrell B.G."/>
            <person name="Badcock K."/>
            <person name="Benes V."/>
            <person name="Botstein D."/>
            <person name="Bowman S."/>
            <person name="Brueckner M."/>
            <person name="Carpenter J."/>
            <person name="Cherry J.M."/>
            <person name="Chung E."/>
            <person name="Churcher C.M."/>
            <person name="Coster F."/>
            <person name="Davis K."/>
            <person name="Davis R.W."/>
            <person name="Dietrich F.S."/>
            <person name="Delius H."/>
            <person name="DiPaolo T."/>
            <person name="Dubois E."/>
            <person name="Duesterhoeft A."/>
            <person name="Duncan M."/>
            <person name="Floeth M."/>
            <person name="Fortin N."/>
            <person name="Friesen J.D."/>
            <person name="Fritz C."/>
            <person name="Goffeau A."/>
            <person name="Hall J."/>
            <person name="Hebling U."/>
            <person name="Heumann K."/>
            <person name="Hilbert H."/>
            <person name="Hillier L.W."/>
            <person name="Hunicke-Smith S."/>
            <person name="Hyman R.W."/>
            <person name="Johnston M."/>
            <person name="Kalman S."/>
            <person name="Kleine K."/>
            <person name="Komp C."/>
            <person name="Kurdi O."/>
            <person name="Lashkari D."/>
            <person name="Lew H."/>
            <person name="Lin A."/>
            <person name="Lin D."/>
            <person name="Louis E.J."/>
            <person name="Marathe R."/>
            <person name="Messenguy F."/>
            <person name="Mewes H.-W."/>
            <person name="Mirtipati S."/>
            <person name="Moestl D."/>
            <person name="Mueller-Auer S."/>
            <person name="Namath A."/>
            <person name="Nentwich U."/>
            <person name="Oefner P."/>
            <person name="Pearson D."/>
            <person name="Petel F.X."/>
            <person name="Pohl T.M."/>
            <person name="Purnelle B."/>
            <person name="Rajandream M.A."/>
            <person name="Rechmann S."/>
            <person name="Rieger M."/>
            <person name="Riles L."/>
            <person name="Roberts D."/>
            <person name="Schaefer M."/>
            <person name="Scharfe M."/>
            <person name="Scherens B."/>
            <person name="Schramm S."/>
            <person name="Schroeder M."/>
            <person name="Sdicu A.-M."/>
            <person name="Tettelin H."/>
            <person name="Urrestarazu L.A."/>
            <person name="Ushinsky S."/>
            <person name="Vierendeels F."/>
            <person name="Vissers S."/>
            <person name="Voss H."/>
            <person name="Walsh S.V."/>
            <person name="Wambutt R."/>
            <person name="Wang Y."/>
            <person name="Wedler E."/>
            <person name="Wedler H."/>
            <person name="Winnett E."/>
            <person name="Zhong W.-W."/>
            <person name="Zollner A."/>
            <person name="Vo D.H."/>
            <person name="Hani J."/>
        </authorList>
    </citation>
    <scope>NUCLEOTIDE SEQUENCE [LARGE SCALE GENOMIC DNA]</scope>
    <source>
        <strain>ATCC 204508 / S288c</strain>
    </source>
</reference>
<reference key="2">
    <citation type="journal article" date="2014" name="G3 (Bethesda)">
        <title>The reference genome sequence of Saccharomyces cerevisiae: Then and now.</title>
        <authorList>
            <person name="Engel S.R."/>
            <person name="Dietrich F.S."/>
            <person name="Fisk D.G."/>
            <person name="Binkley G."/>
            <person name="Balakrishnan R."/>
            <person name="Costanzo M.C."/>
            <person name="Dwight S.S."/>
            <person name="Hitz B.C."/>
            <person name="Karra K."/>
            <person name="Nash R.S."/>
            <person name="Weng S."/>
            <person name="Wong E.D."/>
            <person name="Lloyd P."/>
            <person name="Skrzypek M.S."/>
            <person name="Miyasato S.R."/>
            <person name="Simison M."/>
            <person name="Cherry J.M."/>
        </authorList>
    </citation>
    <scope>GENOME REANNOTATION</scope>
    <source>
        <strain>ATCC 204508 / S288c</strain>
    </source>
</reference>
<reference key="3">
    <citation type="journal article" date="2001" name="J. Cell Sci.">
        <title>A novel nucleolar G-protein conserved in eukaryotes.</title>
        <authorList>
            <person name="Park J.-H."/>
            <person name="Jensen B.C."/>
            <person name="Kifer C.T."/>
            <person name="Parsons M."/>
        </authorList>
    </citation>
    <scope>SUBCELLULAR LOCATION</scope>
</reference>
<reference key="4">
    <citation type="journal article" date="2003" name="Mol. Cell. Biol.">
        <title>Sequential protein association with nascent 60S ribosomal particles.</title>
        <authorList>
            <person name="Saveanu C."/>
            <person name="Namane A."/>
            <person name="Gleizes P.-E."/>
            <person name="Lebreton A."/>
            <person name="Rousselle J.-C."/>
            <person name="Noaillac-Depeyre J."/>
            <person name="Gas N."/>
            <person name="Jacquier A."/>
            <person name="Fromont-Racine M."/>
        </authorList>
    </citation>
    <scope>FUNCTION</scope>
    <scope>INTERACTION WITH RLP24</scope>
</reference>
<reference key="5">
    <citation type="journal article" date="2003" name="Nature">
        <title>Global analysis of protein expression in yeast.</title>
        <authorList>
            <person name="Ghaemmaghami S."/>
            <person name="Huh W.-K."/>
            <person name="Bower K."/>
            <person name="Howson R.W."/>
            <person name="Belle A."/>
            <person name="Dephoure N."/>
            <person name="O'Shea E.K."/>
            <person name="Weissman J.S."/>
        </authorList>
    </citation>
    <scope>LEVEL OF PROTEIN EXPRESSION [LARGE SCALE ANALYSIS]</scope>
</reference>
<reference key="6">
    <citation type="journal article" date="2009" name="Science">
        <title>Global analysis of Cdk1 substrate phosphorylation sites provides insights into evolution.</title>
        <authorList>
            <person name="Holt L.J."/>
            <person name="Tuch B.B."/>
            <person name="Villen J."/>
            <person name="Johnson A.D."/>
            <person name="Gygi S.P."/>
            <person name="Morgan D.O."/>
        </authorList>
    </citation>
    <scope>PHOSPHORYLATION [LARGE SCALE ANALYSIS] AT SER-563</scope>
    <scope>IDENTIFICATION BY MASS SPECTROMETRY [LARGE SCALE ANALYSIS]</scope>
</reference>
<protein>
    <recommendedName>
        <fullName>Nucleolar GTP-binding protein 1</fullName>
    </recommendedName>
</protein>
<sequence length="647" mass="74410">MQLSWKDIPTVAPANDLLDIVLNRTQRKTPTVIRPGFKITRIRAFYMRKVKYTGEGFVEKFEDILKGFPNINDVHPFHRDLMDTLYEKNHYKISLAAISRAKSLVEQVARDYVRLLKFGQSLFQCKQLKRAALGRMATIVKKLRDPLAYLEQVRQHIGRLPSIDPNTRTLLICGYPNVGKSSFLRCITKSDVDVQPYAFTTKSLYVGHFDYKYLRFQAIDTPGILDRPTEEMNNIEMQSIYAIAHLRSCVLYFMDLSEQCGFTIEAQVKLFHSIKPLFANKSVMVVINKTDIIRPEDLDEERAQLLESVKEVPGVEIMTSSCQLEENVMEVRNKACEKLLASRIENKLKSQSRINNVLNKIHVAQPQARDDVKRTPFIPESVKNLKKYDPEDPNRRKLARDIEAENGGAGVFNVNLKDKYLLEDDEWKNDIMPEILDGKNVYDFLDPEIAAKLQALEEEEEKLENEGFYNSDDEEEIYDGFEASEVDDIKEKAAWIRNRQKTMIAEARNRKSLKNKAIMPRSKLTKSFGKMEEHMSTLGHDMSALQDKQNRAARKNRYVERGSDVVFGDQDALTASTENGVKLRQTDRLLDGVADGSMRSKADRMAKMERRERNRHAKQGESDRHNAVSLSKHLFSGKRGVGKTDFR</sequence>
<evidence type="ECO:0000255" key="1">
    <source>
        <dbReference type="PROSITE-ProRule" id="PRU01047"/>
    </source>
</evidence>
<evidence type="ECO:0000256" key="2">
    <source>
        <dbReference type="SAM" id="MobiDB-lite"/>
    </source>
</evidence>
<evidence type="ECO:0000269" key="3">
    <source>
    </source>
</evidence>
<evidence type="ECO:0000269" key="4">
    <source>
    </source>
</evidence>
<evidence type="ECO:0000269" key="5">
    <source>
    </source>
</evidence>
<evidence type="ECO:0007744" key="6">
    <source>
    </source>
</evidence>
<evidence type="ECO:0007829" key="7">
    <source>
        <dbReference type="PDB" id="7NAD"/>
    </source>
</evidence>
<evidence type="ECO:0007829" key="8">
    <source>
        <dbReference type="PDB" id="7NAF"/>
    </source>
</evidence>
<accession>Q02892</accession>
<accession>D6W3S4</accession>
<keyword id="KW-0002">3D-structure</keyword>
<keyword id="KW-0342">GTP-binding</keyword>
<keyword id="KW-0547">Nucleotide-binding</keyword>
<keyword id="KW-0539">Nucleus</keyword>
<keyword id="KW-0597">Phosphoprotein</keyword>
<keyword id="KW-1185">Reference proteome</keyword>
<keyword id="KW-0690">Ribosome biogenesis</keyword>
<dbReference type="EMBL" id="U43281">
    <property type="protein sequence ID" value="AAB68206.1"/>
    <property type="molecule type" value="Genomic_DNA"/>
</dbReference>
<dbReference type="EMBL" id="BK006949">
    <property type="protein sequence ID" value="DAA11340.1"/>
    <property type="molecule type" value="Genomic_DNA"/>
</dbReference>
<dbReference type="PIR" id="S61973">
    <property type="entry name" value="S61973"/>
</dbReference>
<dbReference type="RefSeq" id="NP_015232.1">
    <property type="nucleotide sequence ID" value="NM_001183907.1"/>
</dbReference>
<dbReference type="PDB" id="3JCT">
    <property type="method" value="EM"/>
    <property type="resolution" value="3.08 A"/>
    <property type="chains" value="b=1-647"/>
</dbReference>
<dbReference type="PDB" id="4V7F">
    <property type="method" value="EM"/>
    <property type="resolution" value="8.70 A"/>
    <property type="chains" value="o=1-647"/>
</dbReference>
<dbReference type="PDB" id="5JCS">
    <property type="method" value="EM"/>
    <property type="resolution" value="9.50 A"/>
    <property type="chains" value="o=1-647"/>
</dbReference>
<dbReference type="PDB" id="6C0F">
    <property type="method" value="EM"/>
    <property type="resolution" value="3.70 A"/>
    <property type="chains" value="W=1-647"/>
</dbReference>
<dbReference type="PDB" id="6ELZ">
    <property type="method" value="EM"/>
    <property type="resolution" value="3.30 A"/>
    <property type="chains" value="b=1-647"/>
</dbReference>
<dbReference type="PDB" id="6EM1">
    <property type="method" value="EM"/>
    <property type="resolution" value="3.60 A"/>
    <property type="chains" value="b=1-647"/>
</dbReference>
<dbReference type="PDB" id="6EM5">
    <property type="method" value="EM"/>
    <property type="resolution" value="4.30 A"/>
    <property type="chains" value="b=1-647"/>
</dbReference>
<dbReference type="PDB" id="6FT6">
    <property type="method" value="EM"/>
    <property type="resolution" value="3.90 A"/>
    <property type="chains" value="b=1-647"/>
</dbReference>
<dbReference type="PDB" id="6M62">
    <property type="method" value="EM"/>
    <property type="resolution" value="3.20 A"/>
    <property type="chains" value="b=1-647"/>
</dbReference>
<dbReference type="PDB" id="6N8J">
    <property type="method" value="EM"/>
    <property type="resolution" value="3.50 A"/>
    <property type="chains" value="b=1-647"/>
</dbReference>
<dbReference type="PDB" id="6N8K">
    <property type="method" value="EM"/>
    <property type="resolution" value="3.60 A"/>
    <property type="chains" value="b=1-647"/>
</dbReference>
<dbReference type="PDB" id="6N8L">
    <property type="method" value="EM"/>
    <property type="resolution" value="3.60 A"/>
    <property type="chains" value="b=1-647"/>
</dbReference>
<dbReference type="PDB" id="6YLG">
    <property type="method" value="EM"/>
    <property type="resolution" value="3.00 A"/>
    <property type="chains" value="b=1-647"/>
</dbReference>
<dbReference type="PDB" id="6YLH">
    <property type="method" value="EM"/>
    <property type="resolution" value="3.10 A"/>
    <property type="chains" value="b=1-647"/>
</dbReference>
<dbReference type="PDB" id="6YLX">
    <property type="method" value="EM"/>
    <property type="resolution" value="3.90 A"/>
    <property type="chains" value="b=1-647"/>
</dbReference>
<dbReference type="PDB" id="6YLY">
    <property type="method" value="EM"/>
    <property type="resolution" value="3.80 A"/>
    <property type="chains" value="b=1-647"/>
</dbReference>
<dbReference type="PDB" id="7BT6">
    <property type="method" value="EM"/>
    <property type="resolution" value="3.12 A"/>
    <property type="chains" value="b=1-647"/>
</dbReference>
<dbReference type="PDB" id="7BTB">
    <property type="method" value="EM"/>
    <property type="resolution" value="3.22 A"/>
    <property type="chains" value="b=1-647"/>
</dbReference>
<dbReference type="PDB" id="7NAC">
    <property type="method" value="EM"/>
    <property type="resolution" value="3.04 A"/>
    <property type="chains" value="b=1-647"/>
</dbReference>
<dbReference type="PDB" id="7NAD">
    <property type="method" value="EM"/>
    <property type="resolution" value="3.04 A"/>
    <property type="chains" value="b=1-647"/>
</dbReference>
<dbReference type="PDB" id="7NAF">
    <property type="method" value="EM"/>
    <property type="resolution" value="3.13 A"/>
    <property type="chains" value="b=20-59"/>
</dbReference>
<dbReference type="PDB" id="7OF1">
    <property type="method" value="EM"/>
    <property type="resolution" value="3.10 A"/>
    <property type="chains" value="b=1-647"/>
</dbReference>
<dbReference type="PDB" id="7OH3">
    <property type="method" value="EM"/>
    <property type="resolution" value="3.40 A"/>
    <property type="chains" value="b=1-647"/>
</dbReference>
<dbReference type="PDB" id="7OHP">
    <property type="method" value="EM"/>
    <property type="resolution" value="3.90 A"/>
    <property type="chains" value="b=1-647"/>
</dbReference>
<dbReference type="PDB" id="7OHQ">
    <property type="method" value="EM"/>
    <property type="resolution" value="3.10 A"/>
    <property type="chains" value="b=1-647"/>
</dbReference>
<dbReference type="PDB" id="7OHR">
    <property type="method" value="EM"/>
    <property type="resolution" value="4.72 A"/>
    <property type="chains" value="b=1-647"/>
</dbReference>
<dbReference type="PDB" id="7OHS">
    <property type="method" value="EM"/>
    <property type="resolution" value="4.38 A"/>
    <property type="chains" value="b=1-647"/>
</dbReference>
<dbReference type="PDB" id="7OHT">
    <property type="method" value="EM"/>
    <property type="resolution" value="4.70 A"/>
    <property type="chains" value="b=1-647"/>
</dbReference>
<dbReference type="PDB" id="7OHU">
    <property type="method" value="EM"/>
    <property type="resolution" value="3.70 A"/>
    <property type="chains" value="b=1-647"/>
</dbReference>
<dbReference type="PDB" id="7OHV">
    <property type="method" value="EM"/>
    <property type="resolution" value="3.90 A"/>
    <property type="chains" value="b=1-647"/>
</dbReference>
<dbReference type="PDB" id="7OHW">
    <property type="method" value="EM"/>
    <property type="resolution" value="3.50 A"/>
    <property type="chains" value="b=1-647"/>
</dbReference>
<dbReference type="PDB" id="7OHX">
    <property type="method" value="EM"/>
    <property type="resolution" value="3.30 A"/>
    <property type="chains" value="b=1-647"/>
</dbReference>
<dbReference type="PDB" id="7OHY">
    <property type="method" value="EM"/>
    <property type="resolution" value="3.90 A"/>
    <property type="chains" value="b=1-647"/>
</dbReference>
<dbReference type="PDB" id="7R72">
    <property type="method" value="EM"/>
    <property type="resolution" value="3.07 A"/>
    <property type="chains" value="b=1-647"/>
</dbReference>
<dbReference type="PDB" id="7R7A">
    <property type="method" value="EM"/>
    <property type="resolution" value="3.04 A"/>
    <property type="chains" value="b=1-647"/>
</dbReference>
<dbReference type="PDB" id="7R7C">
    <property type="method" value="EM"/>
    <property type="resolution" value="3.71 A"/>
    <property type="chains" value="b=92-142"/>
</dbReference>
<dbReference type="PDB" id="7U0H">
    <property type="method" value="EM"/>
    <property type="resolution" value="2.76 A"/>
    <property type="chains" value="b=1-647"/>
</dbReference>
<dbReference type="PDB" id="7UG6">
    <property type="method" value="EM"/>
    <property type="resolution" value="2.90 A"/>
    <property type="chains" value="b=1-647"/>
</dbReference>
<dbReference type="PDB" id="7UOO">
    <property type="method" value="EM"/>
    <property type="resolution" value="2.34 A"/>
    <property type="chains" value="b=1-647"/>
</dbReference>
<dbReference type="PDB" id="7UQB">
    <property type="method" value="EM"/>
    <property type="resolution" value="2.43 A"/>
    <property type="chains" value="b=1-647"/>
</dbReference>
<dbReference type="PDB" id="7UQZ">
    <property type="method" value="EM"/>
    <property type="resolution" value="2.44 A"/>
    <property type="chains" value="b=1-647"/>
</dbReference>
<dbReference type="PDB" id="7V08">
    <property type="method" value="EM"/>
    <property type="resolution" value="2.36 A"/>
    <property type="chains" value="b=1-647"/>
</dbReference>
<dbReference type="PDB" id="7Z34">
    <property type="method" value="EM"/>
    <property type="resolution" value="3.80 A"/>
    <property type="chains" value="b=1-647"/>
</dbReference>
<dbReference type="PDB" id="8HFR">
    <property type="method" value="EM"/>
    <property type="resolution" value="2.64 A"/>
    <property type="chains" value="rA=1-647"/>
</dbReference>
<dbReference type="PDB" id="8V83">
    <property type="method" value="EM"/>
    <property type="resolution" value="2.53 A"/>
    <property type="chains" value="b=1-647"/>
</dbReference>
<dbReference type="PDB" id="8V84">
    <property type="method" value="EM"/>
    <property type="resolution" value="2.70 A"/>
    <property type="chains" value="b=1-647"/>
</dbReference>
<dbReference type="PDB" id="8V87">
    <property type="method" value="EM"/>
    <property type="resolution" value="2.66 A"/>
    <property type="chains" value="b=1-647"/>
</dbReference>
<dbReference type="PDBsum" id="3JCT"/>
<dbReference type="PDBsum" id="4V7F"/>
<dbReference type="PDBsum" id="5JCS"/>
<dbReference type="PDBsum" id="6C0F"/>
<dbReference type="PDBsum" id="6ELZ"/>
<dbReference type="PDBsum" id="6EM1"/>
<dbReference type="PDBsum" id="6EM5"/>
<dbReference type="PDBsum" id="6FT6"/>
<dbReference type="PDBsum" id="6M62"/>
<dbReference type="PDBsum" id="6N8J"/>
<dbReference type="PDBsum" id="6N8K"/>
<dbReference type="PDBsum" id="6N8L"/>
<dbReference type="PDBsum" id="6YLG"/>
<dbReference type="PDBsum" id="6YLH"/>
<dbReference type="PDBsum" id="6YLX"/>
<dbReference type="PDBsum" id="6YLY"/>
<dbReference type="PDBsum" id="7BT6"/>
<dbReference type="PDBsum" id="7BTB"/>
<dbReference type="PDBsum" id="7NAC"/>
<dbReference type="PDBsum" id="7NAD"/>
<dbReference type="PDBsum" id="7NAF"/>
<dbReference type="PDBsum" id="7OF1"/>
<dbReference type="PDBsum" id="7OH3"/>
<dbReference type="PDBsum" id="7OHP"/>
<dbReference type="PDBsum" id="7OHQ"/>
<dbReference type="PDBsum" id="7OHR"/>
<dbReference type="PDBsum" id="7OHS"/>
<dbReference type="PDBsum" id="7OHT"/>
<dbReference type="PDBsum" id="7OHU"/>
<dbReference type="PDBsum" id="7OHV"/>
<dbReference type="PDBsum" id="7OHW"/>
<dbReference type="PDBsum" id="7OHX"/>
<dbReference type="PDBsum" id="7OHY"/>
<dbReference type="PDBsum" id="7R72"/>
<dbReference type="PDBsum" id="7R7A"/>
<dbReference type="PDBsum" id="7R7C"/>
<dbReference type="PDBsum" id="7U0H"/>
<dbReference type="PDBsum" id="7UG6"/>
<dbReference type="PDBsum" id="7UOO"/>
<dbReference type="PDBsum" id="7UQB"/>
<dbReference type="PDBsum" id="7UQZ"/>
<dbReference type="PDBsum" id="7V08"/>
<dbReference type="PDBsum" id="7Z34"/>
<dbReference type="PDBsum" id="8HFR"/>
<dbReference type="PDBsum" id="8V83"/>
<dbReference type="PDBsum" id="8V84"/>
<dbReference type="PDBsum" id="8V87"/>
<dbReference type="EMDB" id="EMD-0369"/>
<dbReference type="EMDB" id="EMD-0370"/>
<dbReference type="EMDB" id="EMD-0371"/>
<dbReference type="EMDB" id="EMD-10838"/>
<dbReference type="EMDB" id="EMD-10839"/>
<dbReference type="EMDB" id="EMD-10841"/>
<dbReference type="EMDB" id="EMD-10842"/>
<dbReference type="EMDB" id="EMD-12866"/>
<dbReference type="EMDB" id="EMD-12892"/>
<dbReference type="EMDB" id="EMD-12904"/>
<dbReference type="EMDB" id="EMD-12905"/>
<dbReference type="EMDB" id="EMD-12906"/>
<dbReference type="EMDB" id="EMD-12907"/>
<dbReference type="EMDB" id="EMD-12908"/>
<dbReference type="EMDB" id="EMD-12909"/>
<dbReference type="EMDB" id="EMD-12910"/>
<dbReference type="EMDB" id="EMD-12911"/>
<dbReference type="EMDB" id="EMD-12912"/>
<dbReference type="EMDB" id="EMD-12913"/>
<dbReference type="EMDB" id="EMD-14471"/>
<dbReference type="EMDB" id="EMD-24269"/>
<dbReference type="EMDB" id="EMD-24270"/>
<dbReference type="EMDB" id="EMD-24290"/>
<dbReference type="EMDB" id="EMD-24296"/>
<dbReference type="EMDB" id="EMD-24297"/>
<dbReference type="EMDB" id="EMD-26259"/>
<dbReference type="EMDB" id="EMD-26485"/>
<dbReference type="EMDB" id="EMD-26651"/>
<dbReference type="EMDB" id="EMD-26686"/>
<dbReference type="EMDB" id="EMD-26703"/>
<dbReference type="EMDB" id="EMD-26941"/>
<dbReference type="EMDB" id="EMD-30108"/>
<dbReference type="EMDB" id="EMD-30170"/>
<dbReference type="EMDB" id="EMD-30174"/>
<dbReference type="EMDB" id="EMD-34725"/>
<dbReference type="EMDB" id="EMD-43017"/>
<dbReference type="EMDB" id="EMD-4302"/>
<dbReference type="EMDB" id="EMD-43021"/>
<dbReference type="EMDB" id="EMD-43027"/>
<dbReference type="EMDB" id="EMD-7324"/>
<dbReference type="SMR" id="Q02892"/>
<dbReference type="BioGRID" id="36088">
    <property type="interactions" value="429"/>
</dbReference>
<dbReference type="DIP" id="DIP-2785N"/>
<dbReference type="FunCoup" id="Q02892">
    <property type="interactions" value="1630"/>
</dbReference>
<dbReference type="IntAct" id="Q02892">
    <property type="interactions" value="154"/>
</dbReference>
<dbReference type="MINT" id="Q02892"/>
<dbReference type="STRING" id="4932.YPL093W"/>
<dbReference type="iPTMnet" id="Q02892"/>
<dbReference type="PaxDb" id="4932-YPL093W"/>
<dbReference type="PeptideAtlas" id="Q02892"/>
<dbReference type="EnsemblFungi" id="YPL093W_mRNA">
    <property type="protein sequence ID" value="YPL093W"/>
    <property type="gene ID" value="YPL093W"/>
</dbReference>
<dbReference type="GeneID" id="856012"/>
<dbReference type="KEGG" id="sce:YPL093W"/>
<dbReference type="AGR" id="SGD:S000006014"/>
<dbReference type="SGD" id="S000006014">
    <property type="gene designation" value="NOG1"/>
</dbReference>
<dbReference type="VEuPathDB" id="FungiDB:YPL093W"/>
<dbReference type="eggNOG" id="KOG1490">
    <property type="taxonomic scope" value="Eukaryota"/>
</dbReference>
<dbReference type="GeneTree" id="ENSGT00390000018475"/>
<dbReference type="HOGENOM" id="CLU_011784_4_1_1"/>
<dbReference type="InParanoid" id="Q02892"/>
<dbReference type="OMA" id="EWKNDVM"/>
<dbReference type="OrthoDB" id="415015at2759"/>
<dbReference type="BioCyc" id="YEAST:G3O-33997-MONOMER"/>
<dbReference type="BioGRID-ORCS" id="856012">
    <property type="hits" value="9 hits in 10 CRISPR screens"/>
</dbReference>
<dbReference type="CD-CODE" id="BDAE0F88">
    <property type="entry name" value="Nucleolus"/>
</dbReference>
<dbReference type="PRO" id="PR:Q02892"/>
<dbReference type="Proteomes" id="UP000002311">
    <property type="component" value="Chromosome XVI"/>
</dbReference>
<dbReference type="RNAct" id="Q02892">
    <property type="molecule type" value="protein"/>
</dbReference>
<dbReference type="GO" id="GO:0005737">
    <property type="term" value="C:cytoplasm"/>
    <property type="evidence" value="ECO:0000314"/>
    <property type="project" value="SGD"/>
</dbReference>
<dbReference type="GO" id="GO:0005730">
    <property type="term" value="C:nucleolus"/>
    <property type="evidence" value="ECO:0000314"/>
    <property type="project" value="SGD"/>
</dbReference>
<dbReference type="GO" id="GO:0030687">
    <property type="term" value="C:preribosome, large subunit precursor"/>
    <property type="evidence" value="ECO:0000314"/>
    <property type="project" value="SGD"/>
</dbReference>
<dbReference type="GO" id="GO:0005525">
    <property type="term" value="F:GTP binding"/>
    <property type="evidence" value="ECO:0000250"/>
    <property type="project" value="SGD"/>
</dbReference>
<dbReference type="GO" id="GO:0003924">
    <property type="term" value="F:GTPase activity"/>
    <property type="evidence" value="ECO:0000318"/>
    <property type="project" value="GO_Central"/>
</dbReference>
<dbReference type="GO" id="GO:0003723">
    <property type="term" value="F:RNA binding"/>
    <property type="evidence" value="ECO:0000318"/>
    <property type="project" value="GO_Central"/>
</dbReference>
<dbReference type="GO" id="GO:1902626">
    <property type="term" value="P:assembly of large subunit precursor of preribosome"/>
    <property type="evidence" value="ECO:0000315"/>
    <property type="project" value="SGD"/>
</dbReference>
<dbReference type="GO" id="GO:0042273">
    <property type="term" value="P:ribosomal large subunit biogenesis"/>
    <property type="evidence" value="ECO:0000314"/>
    <property type="project" value="SGD"/>
</dbReference>
<dbReference type="GO" id="GO:0000054">
    <property type="term" value="P:ribosomal subunit export from nucleus"/>
    <property type="evidence" value="ECO:0000315"/>
    <property type="project" value="SGD"/>
</dbReference>
<dbReference type="GO" id="GO:0006364">
    <property type="term" value="P:rRNA processing"/>
    <property type="evidence" value="ECO:0000315"/>
    <property type="project" value="SGD"/>
</dbReference>
<dbReference type="CDD" id="cd01897">
    <property type="entry name" value="NOG"/>
    <property type="match status" value="1"/>
</dbReference>
<dbReference type="FunFam" id="1.20.120.1190:FF:000001">
    <property type="entry name" value="Nucleolar GTP-binding protein 1"/>
    <property type="match status" value="1"/>
</dbReference>
<dbReference type="FunFam" id="3.40.50.300:FF:000496">
    <property type="entry name" value="Nucleolar GTP-binding protein 1"/>
    <property type="match status" value="1"/>
</dbReference>
<dbReference type="Gene3D" id="1.20.120.1190">
    <property type="match status" value="1"/>
</dbReference>
<dbReference type="Gene3D" id="3.40.50.300">
    <property type="entry name" value="P-loop containing nucleotide triphosphate hydrolases"/>
    <property type="match status" value="1"/>
</dbReference>
<dbReference type="InterPro" id="IPR031167">
    <property type="entry name" value="G_OBG"/>
</dbReference>
<dbReference type="InterPro" id="IPR006073">
    <property type="entry name" value="GTP-bd"/>
</dbReference>
<dbReference type="InterPro" id="IPR024926">
    <property type="entry name" value="NOG1"/>
</dbReference>
<dbReference type="InterPro" id="IPR041623">
    <property type="entry name" value="NOG1_N"/>
</dbReference>
<dbReference type="InterPro" id="IPR010674">
    <property type="entry name" value="NOG1_Rossman_fold_dom"/>
</dbReference>
<dbReference type="InterPro" id="IPR012973">
    <property type="entry name" value="NOG_C"/>
</dbReference>
<dbReference type="InterPro" id="IPR027417">
    <property type="entry name" value="P-loop_NTPase"/>
</dbReference>
<dbReference type="PANTHER" id="PTHR45759">
    <property type="entry name" value="NUCLEOLAR GTP-BINDING PROTEIN 1"/>
    <property type="match status" value="1"/>
</dbReference>
<dbReference type="Pfam" id="PF06858">
    <property type="entry name" value="NOG1"/>
    <property type="match status" value="1"/>
</dbReference>
<dbReference type="Pfam" id="PF17835">
    <property type="entry name" value="NOG1_N"/>
    <property type="match status" value="1"/>
</dbReference>
<dbReference type="Pfam" id="PF08155">
    <property type="entry name" value="NOGCT"/>
    <property type="match status" value="1"/>
</dbReference>
<dbReference type="PIRSF" id="PIRSF038919">
    <property type="entry name" value="NOG1"/>
    <property type="match status" value="1"/>
</dbReference>
<dbReference type="PRINTS" id="PR00326">
    <property type="entry name" value="GTP1OBG"/>
</dbReference>
<dbReference type="SUPFAM" id="SSF52540">
    <property type="entry name" value="P-loop containing nucleoside triphosphate hydrolases"/>
    <property type="match status" value="1"/>
</dbReference>
<dbReference type="PROSITE" id="PS51710">
    <property type="entry name" value="G_OBG"/>
    <property type="match status" value="1"/>
</dbReference>
<name>NOG1_YEAST</name>
<comment type="function">
    <text evidence="4">Involved in the biogenesis of the 60S ribosomal subunit.</text>
</comment>
<comment type="subunit">
    <text evidence="4">Associated with nucleolar and cytoplasmic pre-60S particles. Directly interacts with RLP24.</text>
</comment>
<comment type="interaction">
    <interactant intactId="EBI-12105">
        <id>Q02892</id>
    </interactant>
    <interactant intactId="EBI-5644">
        <id>Q12389</id>
        <label>DBP10</label>
    </interactant>
    <organismsDiffer>false</organismsDiffer>
    <experiments>3</experiments>
</comment>
<comment type="interaction">
    <interactant intactId="EBI-12105">
        <id>Q02892</id>
    </interactant>
    <interactant intactId="EBI-28098">
        <id>Q04660</id>
        <label>ERB1</label>
    </interactant>
    <organismsDiffer>false</organismsDiffer>
    <experiments>5</experiments>
</comment>
<comment type="interaction">
    <interactant intactId="EBI-12105">
        <id>Q02892</id>
    </interactant>
    <interactant intactId="EBI-8170">
        <id>Q03532</id>
        <label>HAS1</label>
    </interactant>
    <organismsDiffer>false</organismsDiffer>
    <experiments>3</experiments>
</comment>
<comment type="interaction">
    <interactant intactId="EBI-12105">
        <id>Q02892</id>
    </interactant>
    <interactant intactId="EBI-22906">
        <id>P43586</id>
        <label>LOC1</label>
    </interactant>
    <organismsDiffer>false</organismsDiffer>
    <experiments>5</experiments>
</comment>
<comment type="interaction">
    <interactant intactId="EBI-12105">
        <id>Q02892</id>
    </interactant>
    <interactant intactId="EBI-10944">
        <id>Q12176</id>
        <label>MAK21</label>
    </interactant>
    <organismsDiffer>false</organismsDiffer>
    <experiments>3</experiments>
</comment>
<comment type="interaction">
    <interactant intactId="EBI-12105">
        <id>Q02892</id>
    </interactant>
    <interactant intactId="EBI-12110">
        <id>P40991</id>
        <label>NOP2</label>
    </interactant>
    <organismsDiffer>false</organismsDiffer>
    <experiments>3</experiments>
</comment>
<comment type="interaction">
    <interactant intactId="EBI-12105">
        <id>Q02892</id>
    </interactant>
    <interactant intactId="EBI-12122">
        <id>P37838</id>
        <label>NOP4</label>
    </interactant>
    <organismsDiffer>false</organismsDiffer>
    <experiments>4</experiments>
</comment>
<comment type="interaction">
    <interactant intactId="EBI-12105">
        <id>Q02892</id>
    </interactant>
    <interactant intactId="EBI-13145">
        <id>P53261</id>
        <label>NOP7</label>
    </interactant>
    <organismsDiffer>false</organismsDiffer>
    <experiments>5</experiments>
</comment>
<comment type="interaction">
    <interactant intactId="EBI-12105">
        <id>Q02892</id>
    </interactant>
    <interactant intactId="EBI-23920">
        <id>P53136</id>
        <label>NSA1</label>
    </interactant>
    <organismsDiffer>false</organismsDiffer>
    <experiments>5</experiments>
</comment>
<comment type="interaction">
    <interactant intactId="EBI-12105">
        <id>Q02892</id>
    </interactant>
    <interactant intactId="EBI-22681">
        <id>P40078</id>
        <label>NSA2</label>
    </interactant>
    <organismsDiffer>false</organismsDiffer>
    <experiments>5</experiments>
</comment>
<comment type="interaction">
    <interactant intactId="EBI-12105">
        <id>Q02892</id>
    </interactant>
    <interactant intactId="EBI-15415">
        <id>P40693</id>
        <label>RLP7</label>
    </interactant>
    <organismsDiffer>false</organismsDiffer>
    <experiments>4</experiments>
</comment>
<comment type="interaction">
    <interactant intactId="EBI-12105">
        <id>Q02892</id>
    </interactant>
    <interactant intactId="EBI-15881">
        <id>P36160</id>
        <label>RPF2</label>
    </interactant>
    <organismsDiffer>false</organismsDiffer>
    <experiments>7</experiments>
</comment>
<comment type="interaction">
    <interactant intactId="EBI-12105">
        <id>Q02892</id>
    </interactant>
    <interactant intactId="EBI-15298">
        <id>P0C2I0</id>
        <label>RPL20B</label>
    </interactant>
    <organismsDiffer>false</organismsDiffer>
    <experiments>2</experiments>
</comment>
<comment type="interaction">
    <interactant intactId="EBI-12105">
        <id>Q02892</id>
    </interactant>
    <interactant intactId="EBI-15328">
        <id>P05736</id>
        <label>RPL2B</label>
    </interactant>
    <organismsDiffer>false</organismsDiffer>
    <experiments>2</experiments>
</comment>
<comment type="interaction">
    <interactant intactId="EBI-12105">
        <id>Q02892</id>
    </interactant>
    <interactant intactId="EBI-15398">
        <id>P26321</id>
        <label>RPL5</label>
    </interactant>
    <organismsDiffer>false</organismsDiffer>
    <experiments>2</experiments>
</comment>
<comment type="subcellular location">
    <subcellularLocation>
        <location evidence="3">Nucleus</location>
        <location evidence="3">Nucleolus</location>
    </subcellularLocation>
</comment>
<comment type="miscellaneous">
    <text evidence="5">Present with 28000 molecules/cell in log phase SD medium.</text>
</comment>
<comment type="similarity">
    <text evidence="1">Belongs to the TRAFAC class OBG-HflX-like GTPase superfamily. OBG GTPase family. NOG subfamily.</text>
</comment>
<gene>
    <name type="primary">NOG1</name>
    <name type="ordered locus">YPL093W</name>
    <name type="ORF">LPG15W</name>
</gene>